<comment type="function">
    <text evidence="1">Modulates the synthesis of GlmS, by affecting the processing and stability of the regulatory small RNA GlmZ. When glucosamine-6-phosphate (GlcN6P) concentrations are high in the cell, RapZ binds GlmZ and targets it to cleavage by RNase E. Consequently, GlmZ is inactivated and unable to activate GlmS synthesis. Under low GlcN6P concentrations, RapZ is sequestered and inactivated by an other regulatory small RNA, GlmY, preventing GlmZ degradation and leading to synthesis of GlmS.</text>
</comment>
<comment type="subunit">
    <text evidence="1">Homotrimer.</text>
</comment>
<comment type="similarity">
    <text evidence="1">Belongs to the RapZ-like family. RapZ subfamily.</text>
</comment>
<reference key="1">
    <citation type="journal article" date="2008" name="J. Bacteriol.">
        <title>The pangenome structure of Escherichia coli: comparative genomic analysis of E. coli commensal and pathogenic isolates.</title>
        <authorList>
            <person name="Rasko D.A."/>
            <person name="Rosovitz M.J."/>
            <person name="Myers G.S.A."/>
            <person name="Mongodin E.F."/>
            <person name="Fricke W.F."/>
            <person name="Gajer P."/>
            <person name="Crabtree J."/>
            <person name="Sebaihia M."/>
            <person name="Thomson N.R."/>
            <person name="Chaudhuri R."/>
            <person name="Henderson I.R."/>
            <person name="Sperandio V."/>
            <person name="Ravel J."/>
        </authorList>
    </citation>
    <scope>NUCLEOTIDE SEQUENCE [LARGE SCALE GENOMIC DNA]</scope>
    <source>
        <strain>E24377A / ETEC</strain>
    </source>
</reference>
<accession>A7ZSA4</accession>
<organism>
    <name type="scientific">Escherichia coli O139:H28 (strain E24377A / ETEC)</name>
    <dbReference type="NCBI Taxonomy" id="331111"/>
    <lineage>
        <taxon>Bacteria</taxon>
        <taxon>Pseudomonadati</taxon>
        <taxon>Pseudomonadota</taxon>
        <taxon>Gammaproteobacteria</taxon>
        <taxon>Enterobacterales</taxon>
        <taxon>Enterobacteriaceae</taxon>
        <taxon>Escherichia</taxon>
    </lineage>
</organism>
<dbReference type="EMBL" id="CP000800">
    <property type="protein sequence ID" value="ABV18123.1"/>
    <property type="molecule type" value="Genomic_DNA"/>
</dbReference>
<dbReference type="RefSeq" id="WP_000243741.1">
    <property type="nucleotide sequence ID" value="NC_009801.1"/>
</dbReference>
<dbReference type="SMR" id="A7ZSA4"/>
<dbReference type="GeneID" id="93778776"/>
<dbReference type="KEGG" id="ecw:EcE24377A_3693"/>
<dbReference type="HOGENOM" id="CLU_059558_1_1_6"/>
<dbReference type="Proteomes" id="UP000001122">
    <property type="component" value="Chromosome"/>
</dbReference>
<dbReference type="GO" id="GO:0005524">
    <property type="term" value="F:ATP binding"/>
    <property type="evidence" value="ECO:0007669"/>
    <property type="project" value="UniProtKB-UniRule"/>
</dbReference>
<dbReference type="GO" id="GO:0005525">
    <property type="term" value="F:GTP binding"/>
    <property type="evidence" value="ECO:0007669"/>
    <property type="project" value="UniProtKB-UniRule"/>
</dbReference>
<dbReference type="GO" id="GO:0003723">
    <property type="term" value="F:RNA binding"/>
    <property type="evidence" value="ECO:0007669"/>
    <property type="project" value="UniProtKB-KW"/>
</dbReference>
<dbReference type="Gene3D" id="3.40.50.300">
    <property type="entry name" value="P-loop containing nucleotide triphosphate hydrolases"/>
    <property type="match status" value="1"/>
</dbReference>
<dbReference type="HAMAP" id="MF_00636">
    <property type="entry name" value="RapZ_like"/>
    <property type="match status" value="1"/>
</dbReference>
<dbReference type="InterPro" id="IPR027417">
    <property type="entry name" value="P-loop_NTPase"/>
</dbReference>
<dbReference type="InterPro" id="IPR005337">
    <property type="entry name" value="RapZ-like"/>
</dbReference>
<dbReference type="InterPro" id="IPR053930">
    <property type="entry name" value="RapZ-like_N"/>
</dbReference>
<dbReference type="InterPro" id="IPR053931">
    <property type="entry name" value="RapZ_C"/>
</dbReference>
<dbReference type="NCBIfam" id="NF003828">
    <property type="entry name" value="PRK05416.1"/>
    <property type="match status" value="1"/>
</dbReference>
<dbReference type="PANTHER" id="PTHR30448">
    <property type="entry name" value="RNASE ADAPTER PROTEIN RAPZ"/>
    <property type="match status" value="1"/>
</dbReference>
<dbReference type="PANTHER" id="PTHR30448:SF0">
    <property type="entry name" value="RNASE ADAPTER PROTEIN RAPZ"/>
    <property type="match status" value="1"/>
</dbReference>
<dbReference type="Pfam" id="PF22740">
    <property type="entry name" value="PapZ_C"/>
    <property type="match status" value="1"/>
</dbReference>
<dbReference type="Pfam" id="PF03668">
    <property type="entry name" value="RapZ-like_N"/>
    <property type="match status" value="1"/>
</dbReference>
<dbReference type="PIRSF" id="PIRSF005052">
    <property type="entry name" value="P-loopkin"/>
    <property type="match status" value="1"/>
</dbReference>
<dbReference type="SUPFAM" id="SSF52540">
    <property type="entry name" value="P-loop containing nucleoside triphosphate hydrolases"/>
    <property type="match status" value="1"/>
</dbReference>
<evidence type="ECO:0000255" key="1">
    <source>
        <dbReference type="HAMAP-Rule" id="MF_00636"/>
    </source>
</evidence>
<name>RAPZ_ECO24</name>
<sequence>MVLMIVSGRSGSGKSVALRALEDMGFYCVDNLPVVLLPDLARTLADREISAAVSIDVRNMPESPEIFEQAMSNLPDAFSPQLLFLDADRNTLIRRYSDTRRLHPLSSKNLSLESAIDKESDLLEPLRSRADLIVDTSEMSVHELAEMLRTRLLGKRERELTMVFESFGFKHGIPIDADYVFDVRFLPNPHWDPKLRPMTGLDKPVAAFLDRHTEVHNFIYQTRSYLELWLPMLETNNRSYLTVAIGCTGGKHRSVYIAEQLADYFRSRGKNVQSRHRTLEKRKP</sequence>
<feature type="chain" id="PRO_1000061434" description="RNase adapter protein RapZ">
    <location>
        <begin position="1"/>
        <end position="284"/>
    </location>
</feature>
<feature type="region of interest" description="RNA-binding" evidence="1">
    <location>
        <begin position="266"/>
        <end position="284"/>
    </location>
</feature>
<feature type="binding site" evidence="1">
    <location>
        <begin position="8"/>
        <end position="15"/>
    </location>
    <ligand>
        <name>ATP</name>
        <dbReference type="ChEBI" id="CHEBI:30616"/>
    </ligand>
</feature>
<feature type="binding site" evidence="1">
    <location>
        <begin position="56"/>
        <end position="59"/>
    </location>
    <ligand>
        <name>GTP</name>
        <dbReference type="ChEBI" id="CHEBI:37565"/>
    </ligand>
</feature>
<keyword id="KW-0067">ATP-binding</keyword>
<keyword id="KW-0342">GTP-binding</keyword>
<keyword id="KW-0547">Nucleotide-binding</keyword>
<keyword id="KW-1185">Reference proteome</keyword>
<keyword id="KW-0694">RNA-binding</keyword>
<gene>
    <name evidence="1" type="primary">rapZ</name>
    <name type="ordered locus">EcE24377A_3693</name>
</gene>
<protein>
    <recommendedName>
        <fullName evidence="1">RNase adapter protein RapZ</fullName>
    </recommendedName>
</protein>
<proteinExistence type="inferred from homology"/>